<accession>B0S1L9</accession>
<dbReference type="EC" id="3.1.11.6" evidence="1"/>
<dbReference type="EMBL" id="AP008971">
    <property type="protein sequence ID" value="BAG08259.1"/>
    <property type="molecule type" value="Genomic_DNA"/>
</dbReference>
<dbReference type="RefSeq" id="WP_012290659.1">
    <property type="nucleotide sequence ID" value="NC_010376.1"/>
</dbReference>
<dbReference type="SMR" id="B0S1L9"/>
<dbReference type="STRING" id="334413.FMG_0841"/>
<dbReference type="KEGG" id="fma:FMG_0841"/>
<dbReference type="eggNOG" id="COG1722">
    <property type="taxonomic scope" value="Bacteria"/>
</dbReference>
<dbReference type="HOGENOM" id="CLU_145918_3_2_9"/>
<dbReference type="Proteomes" id="UP000001319">
    <property type="component" value="Chromosome"/>
</dbReference>
<dbReference type="GO" id="GO:0005829">
    <property type="term" value="C:cytosol"/>
    <property type="evidence" value="ECO:0007669"/>
    <property type="project" value="TreeGrafter"/>
</dbReference>
<dbReference type="GO" id="GO:0009318">
    <property type="term" value="C:exodeoxyribonuclease VII complex"/>
    <property type="evidence" value="ECO:0007669"/>
    <property type="project" value="InterPro"/>
</dbReference>
<dbReference type="GO" id="GO:0008855">
    <property type="term" value="F:exodeoxyribonuclease VII activity"/>
    <property type="evidence" value="ECO:0007669"/>
    <property type="project" value="UniProtKB-UniRule"/>
</dbReference>
<dbReference type="GO" id="GO:0006308">
    <property type="term" value="P:DNA catabolic process"/>
    <property type="evidence" value="ECO:0007669"/>
    <property type="project" value="UniProtKB-UniRule"/>
</dbReference>
<dbReference type="Gene3D" id="1.10.287.1040">
    <property type="entry name" value="Exonuclease VII, small subunit"/>
    <property type="match status" value="1"/>
</dbReference>
<dbReference type="HAMAP" id="MF_00337">
    <property type="entry name" value="Exonuc_7_S"/>
    <property type="match status" value="1"/>
</dbReference>
<dbReference type="InterPro" id="IPR003761">
    <property type="entry name" value="Exonuc_VII_S"/>
</dbReference>
<dbReference type="InterPro" id="IPR037004">
    <property type="entry name" value="Exonuc_VII_ssu_sf"/>
</dbReference>
<dbReference type="NCBIfam" id="TIGR01280">
    <property type="entry name" value="xseB"/>
    <property type="match status" value="1"/>
</dbReference>
<dbReference type="PANTHER" id="PTHR34137">
    <property type="entry name" value="EXODEOXYRIBONUCLEASE 7 SMALL SUBUNIT"/>
    <property type="match status" value="1"/>
</dbReference>
<dbReference type="PANTHER" id="PTHR34137:SF1">
    <property type="entry name" value="EXODEOXYRIBONUCLEASE 7 SMALL SUBUNIT"/>
    <property type="match status" value="1"/>
</dbReference>
<dbReference type="Pfam" id="PF02609">
    <property type="entry name" value="Exonuc_VII_S"/>
    <property type="match status" value="1"/>
</dbReference>
<dbReference type="SUPFAM" id="SSF116842">
    <property type="entry name" value="XseB-like"/>
    <property type="match status" value="1"/>
</dbReference>
<feature type="chain" id="PRO_1000119929" description="Exodeoxyribonuclease 7 small subunit">
    <location>
        <begin position="1"/>
        <end position="78"/>
    </location>
</feature>
<name>EX7S_FINM2</name>
<keyword id="KW-0963">Cytoplasm</keyword>
<keyword id="KW-0269">Exonuclease</keyword>
<keyword id="KW-0378">Hydrolase</keyword>
<keyword id="KW-0540">Nuclease</keyword>
<keyword id="KW-1185">Reference proteome</keyword>
<protein>
    <recommendedName>
        <fullName evidence="1">Exodeoxyribonuclease 7 small subunit</fullName>
        <ecNumber evidence="1">3.1.11.6</ecNumber>
    </recommendedName>
    <alternativeName>
        <fullName evidence="1">Exodeoxyribonuclease VII small subunit</fullName>
        <shortName evidence="1">Exonuclease VII small subunit</shortName>
    </alternativeName>
</protein>
<evidence type="ECO:0000255" key="1">
    <source>
        <dbReference type="HAMAP-Rule" id="MF_00337"/>
    </source>
</evidence>
<comment type="function">
    <text evidence="1">Bidirectionally degrades single-stranded DNA into large acid-insoluble oligonucleotides, which are then degraded further into small acid-soluble oligonucleotides.</text>
</comment>
<comment type="catalytic activity">
    <reaction evidence="1">
        <text>Exonucleolytic cleavage in either 5'- to 3'- or 3'- to 5'-direction to yield nucleoside 5'-phosphates.</text>
        <dbReference type="EC" id="3.1.11.6"/>
    </reaction>
</comment>
<comment type="subunit">
    <text evidence="1">Heterooligomer composed of large and small subunits.</text>
</comment>
<comment type="subcellular location">
    <subcellularLocation>
        <location evidence="1">Cytoplasm</location>
    </subcellularLocation>
</comment>
<comment type="similarity">
    <text evidence="1">Belongs to the XseB family.</text>
</comment>
<reference key="1">
    <citation type="journal article" date="2008" name="DNA Res.">
        <title>Complete genome sequence of Finegoldia magna, an anaerobic opportunistic pathogen.</title>
        <authorList>
            <person name="Goto T."/>
            <person name="Yamashita A."/>
            <person name="Hirakawa H."/>
            <person name="Matsutani M."/>
            <person name="Todo K."/>
            <person name="Ohshima K."/>
            <person name="Toh H."/>
            <person name="Miyamoto K."/>
            <person name="Kuhara S."/>
            <person name="Hattori M."/>
            <person name="Shimizu T."/>
            <person name="Akimoto S."/>
        </authorList>
    </citation>
    <scope>NUCLEOTIDE SEQUENCE [LARGE SCALE GENOMIC DNA]</scope>
    <source>
        <strain>ATCC 29328 / DSM 20472 / WAL 2508</strain>
    </source>
</reference>
<sequence>MNEYREYDEGLKRLSEIVEKLEDRELSLEENIKLYEEGMKLHKRLSSILKEQEGKMTLIKDNKEEDFQINMLLSDDNE</sequence>
<gene>
    <name evidence="1" type="primary">xseB</name>
    <name type="ordered locus">FMG_0841</name>
</gene>
<organism>
    <name type="scientific">Finegoldia magna (strain ATCC 29328 / DSM 20472 / WAL 2508)</name>
    <name type="common">Peptostreptococcus magnus</name>
    <dbReference type="NCBI Taxonomy" id="334413"/>
    <lineage>
        <taxon>Bacteria</taxon>
        <taxon>Bacillati</taxon>
        <taxon>Bacillota</taxon>
        <taxon>Tissierellia</taxon>
        <taxon>Tissierellales</taxon>
        <taxon>Peptoniphilaceae</taxon>
        <taxon>Finegoldia</taxon>
    </lineage>
</organism>
<proteinExistence type="inferred from homology"/>